<evidence type="ECO:0000255" key="1">
    <source>
        <dbReference type="HAMAP-Rule" id="MF_01718"/>
    </source>
</evidence>
<reference key="1">
    <citation type="journal article" date="2001" name="Nature">
        <title>Genome sequence of enterohaemorrhagic Escherichia coli O157:H7.</title>
        <authorList>
            <person name="Perna N.T."/>
            <person name="Plunkett G. III"/>
            <person name="Burland V."/>
            <person name="Mau B."/>
            <person name="Glasner J.D."/>
            <person name="Rose D.J."/>
            <person name="Mayhew G.F."/>
            <person name="Evans P.S."/>
            <person name="Gregor J."/>
            <person name="Kirkpatrick H.A."/>
            <person name="Posfai G."/>
            <person name="Hackett J."/>
            <person name="Klink S."/>
            <person name="Boutin A."/>
            <person name="Shao Y."/>
            <person name="Miller L."/>
            <person name="Grotbeck E.J."/>
            <person name="Davis N.W."/>
            <person name="Lim A."/>
            <person name="Dimalanta E.T."/>
            <person name="Potamousis K."/>
            <person name="Apodaca J."/>
            <person name="Anantharaman T.S."/>
            <person name="Lin J."/>
            <person name="Yen G."/>
            <person name="Schwartz D.C."/>
            <person name="Welch R.A."/>
            <person name="Blattner F.R."/>
        </authorList>
    </citation>
    <scope>NUCLEOTIDE SEQUENCE [LARGE SCALE GENOMIC DNA]</scope>
    <source>
        <strain>O157:H7 / EDL933 / ATCC 700927 / EHEC</strain>
    </source>
</reference>
<reference key="2">
    <citation type="journal article" date="2001" name="DNA Res.">
        <title>Complete genome sequence of enterohemorrhagic Escherichia coli O157:H7 and genomic comparison with a laboratory strain K-12.</title>
        <authorList>
            <person name="Hayashi T."/>
            <person name="Makino K."/>
            <person name="Ohnishi M."/>
            <person name="Kurokawa K."/>
            <person name="Ishii K."/>
            <person name="Yokoyama K."/>
            <person name="Han C.-G."/>
            <person name="Ohtsubo E."/>
            <person name="Nakayama K."/>
            <person name="Murata T."/>
            <person name="Tanaka M."/>
            <person name="Tobe T."/>
            <person name="Iida T."/>
            <person name="Takami H."/>
            <person name="Honda T."/>
            <person name="Sasakawa C."/>
            <person name="Ogasawara N."/>
            <person name="Yasunaga T."/>
            <person name="Kuhara S."/>
            <person name="Shiba T."/>
            <person name="Hattori M."/>
            <person name="Shinagawa H."/>
        </authorList>
    </citation>
    <scope>NUCLEOTIDE SEQUENCE [LARGE SCALE GENOMIC DNA]</scope>
    <source>
        <strain>O157:H7 / Sakai / RIMD 0509952 / EHEC</strain>
    </source>
</reference>
<keyword id="KW-0067">ATP-binding</keyword>
<keyword id="KW-0997">Cell inner membrane</keyword>
<keyword id="KW-1003">Cell membrane</keyword>
<keyword id="KW-0472">Membrane</keyword>
<keyword id="KW-0547">Nucleotide-binding</keyword>
<keyword id="KW-1185">Reference proteome</keyword>
<keyword id="KW-1278">Translocase</keyword>
<keyword id="KW-0813">Transport</keyword>
<sequence>MISAQNLVYSLQGRRLTDNVSLTFPGGEIVAILGPNGAGKSTLLRQLTGYLQPDSGECRLFNKPLNEWSITELAKHRAVMRQNSHMAFPFSVQEVIQMGRHPHRTGNQDNETAQIMALCDCQALANRDYRQLSGGEQQRVQLARLLVQLWEPTPSPKWLFLDEPTSALDIHHQQHLFRLLRQLVHERQFNVCCILHDLNLAAHYADRVVLMQKGKVIANGKPQDVLTQQALTMLYGADITVLKDPANHSPLIVLDH</sequence>
<protein>
    <recommendedName>
        <fullName evidence="1">Hemin import ATP-binding protein HmuV</fullName>
        <ecNumber evidence="1">7.6.2.-</ecNumber>
    </recommendedName>
</protein>
<proteinExistence type="inferred from homology"/>
<organism>
    <name type="scientific">Escherichia coli O157:H7</name>
    <dbReference type="NCBI Taxonomy" id="83334"/>
    <lineage>
        <taxon>Bacteria</taxon>
        <taxon>Pseudomonadati</taxon>
        <taxon>Pseudomonadota</taxon>
        <taxon>Gammaproteobacteria</taxon>
        <taxon>Enterobacterales</taxon>
        <taxon>Enterobacteriaceae</taxon>
        <taxon>Escherichia</taxon>
    </lineage>
</organism>
<feature type="chain" id="PRO_0000269589" description="Hemin import ATP-binding protein HmuV">
    <location>
        <begin position="1"/>
        <end position="256"/>
    </location>
</feature>
<feature type="domain" description="ABC transporter" evidence="1">
    <location>
        <begin position="2"/>
        <end position="238"/>
    </location>
</feature>
<feature type="binding site" evidence="1">
    <location>
        <begin position="34"/>
        <end position="41"/>
    </location>
    <ligand>
        <name>ATP</name>
        <dbReference type="ChEBI" id="CHEBI:30616"/>
    </ligand>
</feature>
<comment type="function">
    <text evidence="1">Part of the ABC transporter complex HmuTUV involved in hemin import. Responsible for energy coupling to the transport system.</text>
</comment>
<comment type="subunit">
    <text evidence="1">The complex is composed of two ATP-binding proteins (HmuV), two transmembrane proteins (HmuU) and a solute-binding protein (HmuT).</text>
</comment>
<comment type="subcellular location">
    <subcellularLocation>
        <location evidence="1">Cell inner membrane</location>
        <topology evidence="1">Peripheral membrane protein</topology>
    </subcellularLocation>
</comment>
<comment type="similarity">
    <text evidence="1">Belongs to the ABC transporter superfamily. Heme (hemin) importer (TC 3.A.1.14.5) family.</text>
</comment>
<gene>
    <name evidence="1" type="primary">hmuV</name>
    <name type="ordered locus">Z4919</name>
    <name type="ordered locus">ECs4387</name>
</gene>
<dbReference type="EC" id="7.6.2.-" evidence="1"/>
<dbReference type="EMBL" id="AE005174">
    <property type="protein sequence ID" value="AAG58648.1"/>
    <property type="molecule type" value="Genomic_DNA"/>
</dbReference>
<dbReference type="EMBL" id="BA000007">
    <property type="protein sequence ID" value="BAB37810.1"/>
    <property type="molecule type" value="Genomic_DNA"/>
</dbReference>
<dbReference type="PIR" id="C91177">
    <property type="entry name" value="C91177"/>
</dbReference>
<dbReference type="PIR" id="D86023">
    <property type="entry name" value="D86023"/>
</dbReference>
<dbReference type="RefSeq" id="NP_312414.1">
    <property type="nucleotide sequence ID" value="NC_002695.1"/>
</dbReference>
<dbReference type="RefSeq" id="WP_000622314.1">
    <property type="nucleotide sequence ID" value="NZ_VOAI01000004.1"/>
</dbReference>
<dbReference type="SMR" id="Q8X5N2"/>
<dbReference type="STRING" id="155864.Z4919"/>
<dbReference type="KEGG" id="ece:Z4919"/>
<dbReference type="KEGG" id="ecs:ECs_4387"/>
<dbReference type="PATRIC" id="fig|386585.9.peg.4584"/>
<dbReference type="eggNOG" id="COG4559">
    <property type="taxonomic scope" value="Bacteria"/>
</dbReference>
<dbReference type="HOGENOM" id="CLU_000604_1_11_6"/>
<dbReference type="OMA" id="HQHNTLR"/>
<dbReference type="Proteomes" id="UP000000558">
    <property type="component" value="Chromosome"/>
</dbReference>
<dbReference type="Proteomes" id="UP000002519">
    <property type="component" value="Chromosome"/>
</dbReference>
<dbReference type="GO" id="GO:0005886">
    <property type="term" value="C:plasma membrane"/>
    <property type="evidence" value="ECO:0007669"/>
    <property type="project" value="UniProtKB-SubCell"/>
</dbReference>
<dbReference type="GO" id="GO:0005524">
    <property type="term" value="F:ATP binding"/>
    <property type="evidence" value="ECO:0007669"/>
    <property type="project" value="UniProtKB-KW"/>
</dbReference>
<dbReference type="GO" id="GO:0016887">
    <property type="term" value="F:ATP hydrolysis activity"/>
    <property type="evidence" value="ECO:0007669"/>
    <property type="project" value="InterPro"/>
</dbReference>
<dbReference type="CDD" id="cd03214">
    <property type="entry name" value="ABC_Iron-Siderophores_B12_Hemin"/>
    <property type="match status" value="1"/>
</dbReference>
<dbReference type="FunFam" id="3.40.50.300:FF:000134">
    <property type="entry name" value="Iron-enterobactin ABC transporter ATP-binding protein"/>
    <property type="match status" value="1"/>
</dbReference>
<dbReference type="Gene3D" id="3.40.50.300">
    <property type="entry name" value="P-loop containing nucleotide triphosphate hydrolases"/>
    <property type="match status" value="1"/>
</dbReference>
<dbReference type="InterPro" id="IPR003593">
    <property type="entry name" value="AAA+_ATPase"/>
</dbReference>
<dbReference type="InterPro" id="IPR003439">
    <property type="entry name" value="ABC_transporter-like_ATP-bd"/>
</dbReference>
<dbReference type="InterPro" id="IPR017871">
    <property type="entry name" value="ABC_transporter-like_CS"/>
</dbReference>
<dbReference type="InterPro" id="IPR027417">
    <property type="entry name" value="P-loop_NTPase"/>
</dbReference>
<dbReference type="NCBIfam" id="NF010068">
    <property type="entry name" value="PRK13548.1"/>
    <property type="match status" value="1"/>
</dbReference>
<dbReference type="PANTHER" id="PTHR42794">
    <property type="entry name" value="HEMIN IMPORT ATP-BINDING PROTEIN HMUV"/>
    <property type="match status" value="1"/>
</dbReference>
<dbReference type="PANTHER" id="PTHR42794:SF1">
    <property type="entry name" value="HEMIN IMPORT ATP-BINDING PROTEIN HMUV"/>
    <property type="match status" value="1"/>
</dbReference>
<dbReference type="Pfam" id="PF00005">
    <property type="entry name" value="ABC_tran"/>
    <property type="match status" value="1"/>
</dbReference>
<dbReference type="SMART" id="SM00382">
    <property type="entry name" value="AAA"/>
    <property type="match status" value="1"/>
</dbReference>
<dbReference type="SUPFAM" id="SSF52540">
    <property type="entry name" value="P-loop containing nucleoside triphosphate hydrolases"/>
    <property type="match status" value="1"/>
</dbReference>
<dbReference type="PROSITE" id="PS00211">
    <property type="entry name" value="ABC_TRANSPORTER_1"/>
    <property type="match status" value="1"/>
</dbReference>
<dbReference type="PROSITE" id="PS50893">
    <property type="entry name" value="ABC_TRANSPORTER_2"/>
    <property type="match status" value="1"/>
</dbReference>
<dbReference type="PROSITE" id="PS51261">
    <property type="entry name" value="HMUV"/>
    <property type="match status" value="1"/>
</dbReference>
<accession>Q8X5N2</accession>
<accession>Q7AA11</accession>
<name>HMUV_ECO57</name>